<keyword id="KW-0150">Chloroplast</keyword>
<keyword id="KW-0934">Plastid</keyword>
<keyword id="KW-0687">Ribonucleoprotein</keyword>
<keyword id="KW-0689">Ribosomal protein</keyword>
<keyword id="KW-0694">RNA-binding</keyword>
<keyword id="KW-0699">rRNA-binding</keyword>
<gene>
    <name type="primary">rps3</name>
</gene>
<comment type="subunit">
    <text evidence="1">Part of the 30S ribosomal subunit.</text>
</comment>
<comment type="subcellular location">
    <subcellularLocation>
        <location>Plastid</location>
        <location>Chloroplast</location>
    </subcellularLocation>
</comment>
<comment type="similarity">
    <text evidence="2">Belongs to the universal ribosomal protein uS3 family.</text>
</comment>
<accession>A2T372</accession>
<sequence length="218" mass="25251">MGQKINPLGFRVGVTQQHYSYWFAQPKNYSKFLEEDEKVRTCIEKYVQKQIKNSSNYGGIARIEIEGKTDLLQIEIYTGFPDSLVEENGLGIDKLRTNIENLLKKKSQKIQITLKNVLQPYGEPRILAEHIALQLENRVAFRRTVKKAIELAKKTDIKGIKIQIAGRLNGNEIARVEWVREGRVPLQTIRAHINYCYYPAQTIYGVLGIKIWVFRDEE</sequence>
<geneLocation type="chloroplast"/>
<reference key="1">
    <citation type="journal article" date="2007" name="Am. Fern J.">
        <title>The complete plastid genome sequence of Angiopteris evecta (G. Forst.) Hoffm. (Marattiaceae).</title>
        <authorList>
            <person name="Roper J.M."/>
            <person name="Hansen S.K."/>
            <person name="Wolf P.G."/>
            <person name="Karol K.G."/>
            <person name="Mandoli D.F."/>
            <person name="Everett K.D.E."/>
            <person name="Kuehl J.V."/>
            <person name="Boore J.L."/>
        </authorList>
    </citation>
    <scope>NUCLEOTIDE SEQUENCE [LARGE SCALE GENOMIC DNA]</scope>
</reference>
<dbReference type="EMBL" id="DQ821119">
    <property type="protein sequence ID" value="ABG79639.1"/>
    <property type="molecule type" value="Genomic_DNA"/>
</dbReference>
<dbReference type="RefSeq" id="YP_001023740.1">
    <property type="nucleotide sequence ID" value="NC_008829.1"/>
</dbReference>
<dbReference type="SMR" id="A2T372"/>
<dbReference type="GeneID" id="4788239"/>
<dbReference type="GO" id="GO:0009507">
    <property type="term" value="C:chloroplast"/>
    <property type="evidence" value="ECO:0007669"/>
    <property type="project" value="UniProtKB-SubCell"/>
</dbReference>
<dbReference type="GO" id="GO:0022627">
    <property type="term" value="C:cytosolic small ribosomal subunit"/>
    <property type="evidence" value="ECO:0007669"/>
    <property type="project" value="TreeGrafter"/>
</dbReference>
<dbReference type="GO" id="GO:0019843">
    <property type="term" value="F:rRNA binding"/>
    <property type="evidence" value="ECO:0007669"/>
    <property type="project" value="UniProtKB-UniRule"/>
</dbReference>
<dbReference type="GO" id="GO:0003735">
    <property type="term" value="F:structural constituent of ribosome"/>
    <property type="evidence" value="ECO:0007669"/>
    <property type="project" value="InterPro"/>
</dbReference>
<dbReference type="GO" id="GO:0006412">
    <property type="term" value="P:translation"/>
    <property type="evidence" value="ECO:0007669"/>
    <property type="project" value="UniProtKB-UniRule"/>
</dbReference>
<dbReference type="CDD" id="cd02412">
    <property type="entry name" value="KH-II_30S_S3"/>
    <property type="match status" value="1"/>
</dbReference>
<dbReference type="FunFam" id="3.30.1140.32:FF:000003">
    <property type="entry name" value="30S ribosomal protein S3, chloroplastic"/>
    <property type="match status" value="1"/>
</dbReference>
<dbReference type="Gene3D" id="3.30.300.20">
    <property type="match status" value="1"/>
</dbReference>
<dbReference type="Gene3D" id="3.30.1140.32">
    <property type="entry name" value="Ribosomal protein S3, C-terminal domain"/>
    <property type="match status" value="1"/>
</dbReference>
<dbReference type="HAMAP" id="MF_01309_B">
    <property type="entry name" value="Ribosomal_uS3_B"/>
    <property type="match status" value="1"/>
</dbReference>
<dbReference type="InterPro" id="IPR015946">
    <property type="entry name" value="KH_dom-like_a/b"/>
</dbReference>
<dbReference type="InterPro" id="IPR004044">
    <property type="entry name" value="KH_dom_type_2"/>
</dbReference>
<dbReference type="InterPro" id="IPR009019">
    <property type="entry name" value="KH_sf_prok-type"/>
</dbReference>
<dbReference type="InterPro" id="IPR036419">
    <property type="entry name" value="Ribosomal_S3_C_sf"/>
</dbReference>
<dbReference type="InterPro" id="IPR005704">
    <property type="entry name" value="Ribosomal_uS3_bac-typ"/>
</dbReference>
<dbReference type="InterPro" id="IPR001351">
    <property type="entry name" value="Ribosomal_uS3_C"/>
</dbReference>
<dbReference type="InterPro" id="IPR018280">
    <property type="entry name" value="Ribosomal_uS3_CS"/>
</dbReference>
<dbReference type="NCBIfam" id="TIGR01009">
    <property type="entry name" value="rpsC_bact"/>
    <property type="match status" value="1"/>
</dbReference>
<dbReference type="PANTHER" id="PTHR11760">
    <property type="entry name" value="30S/40S RIBOSOMAL PROTEIN S3"/>
    <property type="match status" value="1"/>
</dbReference>
<dbReference type="PANTHER" id="PTHR11760:SF19">
    <property type="entry name" value="SMALL RIBOSOMAL SUBUNIT PROTEIN US3C"/>
    <property type="match status" value="1"/>
</dbReference>
<dbReference type="Pfam" id="PF00189">
    <property type="entry name" value="Ribosomal_S3_C"/>
    <property type="match status" value="1"/>
</dbReference>
<dbReference type="SUPFAM" id="SSF54814">
    <property type="entry name" value="Prokaryotic type KH domain (KH-domain type II)"/>
    <property type="match status" value="1"/>
</dbReference>
<dbReference type="SUPFAM" id="SSF54821">
    <property type="entry name" value="Ribosomal protein S3 C-terminal domain"/>
    <property type="match status" value="1"/>
</dbReference>
<dbReference type="PROSITE" id="PS50823">
    <property type="entry name" value="KH_TYPE_2"/>
    <property type="match status" value="1"/>
</dbReference>
<dbReference type="PROSITE" id="PS00548">
    <property type="entry name" value="RIBOSOMAL_S3"/>
    <property type="match status" value="1"/>
</dbReference>
<feature type="chain" id="PRO_0000293936" description="Small ribosomal subunit protein uS3c">
    <location>
        <begin position="1"/>
        <end position="218"/>
    </location>
</feature>
<feature type="domain" description="KH type-2">
    <location>
        <begin position="47"/>
        <end position="118"/>
    </location>
</feature>
<evidence type="ECO:0000250" key="1"/>
<evidence type="ECO:0000305" key="2"/>
<proteinExistence type="inferred from homology"/>
<organism>
    <name type="scientific">Angiopteris evecta</name>
    <name type="common">Mule's foot fern</name>
    <name type="synonym">Polypodium evectum</name>
    <dbReference type="NCBI Taxonomy" id="13825"/>
    <lineage>
        <taxon>Eukaryota</taxon>
        <taxon>Viridiplantae</taxon>
        <taxon>Streptophyta</taxon>
        <taxon>Embryophyta</taxon>
        <taxon>Tracheophyta</taxon>
        <taxon>Polypodiopsida</taxon>
        <taxon>Marattiidae</taxon>
        <taxon>Marattiales</taxon>
        <taxon>Marattiaceae</taxon>
        <taxon>Angiopteris</taxon>
    </lineage>
</organism>
<protein>
    <recommendedName>
        <fullName evidence="2">Small ribosomal subunit protein uS3c</fullName>
    </recommendedName>
    <alternativeName>
        <fullName>30S ribosomal protein S3, chloroplastic</fullName>
    </alternativeName>
</protein>
<name>RR3_ANGEV</name>